<feature type="chain" id="PRO_0000109029" description="UDP-N-acetylmuramoylalanine--D-glutamate ligase">
    <location>
        <begin position="1"/>
        <end position="460"/>
    </location>
</feature>
<feature type="binding site" evidence="1">
    <location>
        <begin position="120"/>
        <end position="126"/>
    </location>
    <ligand>
        <name>ATP</name>
        <dbReference type="ChEBI" id="CHEBI:30616"/>
    </ligand>
</feature>
<protein>
    <recommendedName>
        <fullName evidence="1">UDP-N-acetylmuramoylalanine--D-glutamate ligase</fullName>
        <ecNumber evidence="1">6.3.2.9</ecNumber>
    </recommendedName>
    <alternativeName>
        <fullName evidence="1">D-glutamic acid-adding enzyme</fullName>
    </alternativeName>
    <alternativeName>
        <fullName evidence="1">UDP-N-acetylmuramoyl-L-alanyl-D-glutamate synthetase</fullName>
    </alternativeName>
</protein>
<accession>Q74JY5</accession>
<comment type="function">
    <text evidence="1">Cell wall formation. Catalyzes the addition of glutamate to the nucleotide precursor UDP-N-acetylmuramoyl-L-alanine (UMA).</text>
</comment>
<comment type="catalytic activity">
    <reaction evidence="1">
        <text>UDP-N-acetyl-alpha-D-muramoyl-L-alanine + D-glutamate + ATP = UDP-N-acetyl-alpha-D-muramoyl-L-alanyl-D-glutamate + ADP + phosphate + H(+)</text>
        <dbReference type="Rhea" id="RHEA:16429"/>
        <dbReference type="ChEBI" id="CHEBI:15378"/>
        <dbReference type="ChEBI" id="CHEBI:29986"/>
        <dbReference type="ChEBI" id="CHEBI:30616"/>
        <dbReference type="ChEBI" id="CHEBI:43474"/>
        <dbReference type="ChEBI" id="CHEBI:83898"/>
        <dbReference type="ChEBI" id="CHEBI:83900"/>
        <dbReference type="ChEBI" id="CHEBI:456216"/>
        <dbReference type="EC" id="6.3.2.9"/>
    </reaction>
</comment>
<comment type="pathway">
    <text evidence="1">Cell wall biogenesis; peptidoglycan biosynthesis.</text>
</comment>
<comment type="subcellular location">
    <subcellularLocation>
        <location evidence="1">Cytoplasm</location>
    </subcellularLocation>
</comment>
<comment type="similarity">
    <text evidence="1">Belongs to the MurCDEF family.</text>
</comment>
<reference key="1">
    <citation type="journal article" date="2004" name="Proc. Natl. Acad. Sci. U.S.A.">
        <title>The genome sequence of the probiotic intestinal bacterium Lactobacillus johnsonii NCC 533.</title>
        <authorList>
            <person name="Pridmore R.D."/>
            <person name="Berger B."/>
            <person name="Desiere F."/>
            <person name="Vilanova D."/>
            <person name="Barretto C."/>
            <person name="Pittet A.-C."/>
            <person name="Zwahlen M.-C."/>
            <person name="Rouvet M."/>
            <person name="Altermann E."/>
            <person name="Barrangou R."/>
            <person name="Mollet B."/>
            <person name="Mercenier A."/>
            <person name="Klaenhammer T."/>
            <person name="Arigoni F."/>
            <person name="Schell M.A."/>
        </authorList>
    </citation>
    <scope>NUCLEOTIDE SEQUENCE [LARGE SCALE GENOMIC DNA]</scope>
    <source>
        <strain>CNCM I-1225 / La1 / NCC 533</strain>
    </source>
</reference>
<dbReference type="EC" id="6.3.2.9" evidence="1"/>
<dbReference type="EMBL" id="AE017198">
    <property type="protein sequence ID" value="AAS08792.1"/>
    <property type="molecule type" value="Genomic_DNA"/>
</dbReference>
<dbReference type="RefSeq" id="WP_011161842.1">
    <property type="nucleotide sequence ID" value="NC_005362.1"/>
</dbReference>
<dbReference type="SMR" id="Q74JY5"/>
<dbReference type="KEGG" id="ljo:LJ_0971"/>
<dbReference type="PATRIC" id="fig|257314.6.peg.830"/>
<dbReference type="eggNOG" id="COG0771">
    <property type="taxonomic scope" value="Bacteria"/>
</dbReference>
<dbReference type="HOGENOM" id="CLU_032540_0_1_9"/>
<dbReference type="UniPathway" id="UPA00219"/>
<dbReference type="Proteomes" id="UP000000581">
    <property type="component" value="Chromosome"/>
</dbReference>
<dbReference type="GO" id="GO:0005737">
    <property type="term" value="C:cytoplasm"/>
    <property type="evidence" value="ECO:0007669"/>
    <property type="project" value="UniProtKB-SubCell"/>
</dbReference>
<dbReference type="GO" id="GO:0005524">
    <property type="term" value="F:ATP binding"/>
    <property type="evidence" value="ECO:0007669"/>
    <property type="project" value="UniProtKB-UniRule"/>
</dbReference>
<dbReference type="GO" id="GO:0008764">
    <property type="term" value="F:UDP-N-acetylmuramoylalanine-D-glutamate ligase activity"/>
    <property type="evidence" value="ECO:0007669"/>
    <property type="project" value="UniProtKB-UniRule"/>
</dbReference>
<dbReference type="GO" id="GO:0051301">
    <property type="term" value="P:cell division"/>
    <property type="evidence" value="ECO:0007669"/>
    <property type="project" value="UniProtKB-KW"/>
</dbReference>
<dbReference type="GO" id="GO:0071555">
    <property type="term" value="P:cell wall organization"/>
    <property type="evidence" value="ECO:0007669"/>
    <property type="project" value="UniProtKB-KW"/>
</dbReference>
<dbReference type="GO" id="GO:0009252">
    <property type="term" value="P:peptidoglycan biosynthetic process"/>
    <property type="evidence" value="ECO:0007669"/>
    <property type="project" value="UniProtKB-UniRule"/>
</dbReference>
<dbReference type="GO" id="GO:0008360">
    <property type="term" value="P:regulation of cell shape"/>
    <property type="evidence" value="ECO:0007669"/>
    <property type="project" value="UniProtKB-KW"/>
</dbReference>
<dbReference type="Gene3D" id="3.90.190.20">
    <property type="entry name" value="Mur ligase, C-terminal domain"/>
    <property type="match status" value="1"/>
</dbReference>
<dbReference type="Gene3D" id="3.40.1190.10">
    <property type="entry name" value="Mur-like, catalytic domain"/>
    <property type="match status" value="1"/>
</dbReference>
<dbReference type="Gene3D" id="3.40.50.720">
    <property type="entry name" value="NAD(P)-binding Rossmann-like Domain"/>
    <property type="match status" value="1"/>
</dbReference>
<dbReference type="HAMAP" id="MF_00639">
    <property type="entry name" value="MurD"/>
    <property type="match status" value="1"/>
</dbReference>
<dbReference type="InterPro" id="IPR036565">
    <property type="entry name" value="Mur-like_cat_sf"/>
</dbReference>
<dbReference type="InterPro" id="IPR004101">
    <property type="entry name" value="Mur_ligase_C"/>
</dbReference>
<dbReference type="InterPro" id="IPR036615">
    <property type="entry name" value="Mur_ligase_C_dom_sf"/>
</dbReference>
<dbReference type="InterPro" id="IPR013221">
    <property type="entry name" value="Mur_ligase_cen"/>
</dbReference>
<dbReference type="InterPro" id="IPR005762">
    <property type="entry name" value="MurD"/>
</dbReference>
<dbReference type="NCBIfam" id="TIGR01087">
    <property type="entry name" value="murD"/>
    <property type="match status" value="1"/>
</dbReference>
<dbReference type="PANTHER" id="PTHR43692">
    <property type="entry name" value="UDP-N-ACETYLMURAMOYLALANINE--D-GLUTAMATE LIGASE"/>
    <property type="match status" value="1"/>
</dbReference>
<dbReference type="PANTHER" id="PTHR43692:SF1">
    <property type="entry name" value="UDP-N-ACETYLMURAMOYLALANINE--D-GLUTAMATE LIGASE"/>
    <property type="match status" value="1"/>
</dbReference>
<dbReference type="Pfam" id="PF02875">
    <property type="entry name" value="Mur_ligase_C"/>
    <property type="match status" value="1"/>
</dbReference>
<dbReference type="Pfam" id="PF08245">
    <property type="entry name" value="Mur_ligase_M"/>
    <property type="match status" value="1"/>
</dbReference>
<dbReference type="Pfam" id="PF21799">
    <property type="entry name" value="MurD-like_N"/>
    <property type="match status" value="1"/>
</dbReference>
<dbReference type="SUPFAM" id="SSF51984">
    <property type="entry name" value="MurCD N-terminal domain"/>
    <property type="match status" value="1"/>
</dbReference>
<dbReference type="SUPFAM" id="SSF53623">
    <property type="entry name" value="MurD-like peptide ligases, catalytic domain"/>
    <property type="match status" value="1"/>
</dbReference>
<dbReference type="SUPFAM" id="SSF53244">
    <property type="entry name" value="MurD-like peptide ligases, peptide-binding domain"/>
    <property type="match status" value="1"/>
</dbReference>
<gene>
    <name evidence="1" type="primary">murD</name>
    <name type="ordered locus">LJ_0971</name>
</gene>
<proteinExistence type="inferred from homology"/>
<evidence type="ECO:0000255" key="1">
    <source>
        <dbReference type="HAMAP-Rule" id="MF_00639"/>
    </source>
</evidence>
<keyword id="KW-0067">ATP-binding</keyword>
<keyword id="KW-0131">Cell cycle</keyword>
<keyword id="KW-0132">Cell division</keyword>
<keyword id="KW-0133">Cell shape</keyword>
<keyword id="KW-0961">Cell wall biogenesis/degradation</keyword>
<keyword id="KW-0963">Cytoplasm</keyword>
<keyword id="KW-0436">Ligase</keyword>
<keyword id="KW-0547">Nucleotide-binding</keyword>
<keyword id="KW-0573">Peptidoglycan synthesis</keyword>
<sequence>MKKIKTYENKNILILGLGKSGFSVAKLLLKLGAKLTLNDKKDLSNDDRAAELGKLGVRVISGYHPVEIFDEEKFDYLVKNPGIPYENPMVEKAEKLDIPVITEPEIALNVSEAPYVCVTGSNGKTTTVMLTQRIMDHNLSKNGGHAYAVGNIGVPISEVVEKATSKDLLVVEMSSFQLLGVTDIKPKVAAIVDIYNNVHLDYHKTFDNYVEAKLRITQSQDQDDYFIANFDQKNILEKELDKTKAKVQTFSETDKTADYFIGDEYLESKDDHHIMKISDIKIPGIHNQQNCLVAIAISKLMGADDSDIQYALSTFTGATHRLQYVMTYNDRKIYNDSKSTNIEAATVAIPSFKEPEVLIAGGLDRGFMFDSLVPLFKKHVKSIVLYGETKYLLADAARKAGIKDIVIVNTLQEAVPRAYELSEAGDVILFSPACASWDQFNTFEERGDFFVKFIKELKTK</sequence>
<organism>
    <name type="scientific">Lactobacillus johnsonii (strain CNCM I-12250 / La1 / NCC 533)</name>
    <dbReference type="NCBI Taxonomy" id="257314"/>
    <lineage>
        <taxon>Bacteria</taxon>
        <taxon>Bacillati</taxon>
        <taxon>Bacillota</taxon>
        <taxon>Bacilli</taxon>
        <taxon>Lactobacillales</taxon>
        <taxon>Lactobacillaceae</taxon>
        <taxon>Lactobacillus</taxon>
    </lineage>
</organism>
<name>MURD_LACJO</name>